<dbReference type="EC" id="6.1.1.17" evidence="1"/>
<dbReference type="EMBL" id="CP000749">
    <property type="protein sequence ID" value="ABR71792.1"/>
    <property type="molecule type" value="Genomic_DNA"/>
</dbReference>
<dbReference type="SMR" id="A6VZB3"/>
<dbReference type="STRING" id="400668.Mmwyl1_2880"/>
<dbReference type="KEGG" id="mmw:Mmwyl1_2880"/>
<dbReference type="eggNOG" id="COG0008">
    <property type="taxonomic scope" value="Bacteria"/>
</dbReference>
<dbReference type="eggNOG" id="COG1384">
    <property type="taxonomic scope" value="Bacteria"/>
</dbReference>
<dbReference type="HOGENOM" id="CLU_015768_6_3_6"/>
<dbReference type="OrthoDB" id="9807503at2"/>
<dbReference type="GO" id="GO:0005829">
    <property type="term" value="C:cytosol"/>
    <property type="evidence" value="ECO:0007669"/>
    <property type="project" value="TreeGrafter"/>
</dbReference>
<dbReference type="GO" id="GO:0005524">
    <property type="term" value="F:ATP binding"/>
    <property type="evidence" value="ECO:0007669"/>
    <property type="project" value="UniProtKB-UniRule"/>
</dbReference>
<dbReference type="GO" id="GO:0004818">
    <property type="term" value="F:glutamate-tRNA ligase activity"/>
    <property type="evidence" value="ECO:0007669"/>
    <property type="project" value="UniProtKB-UniRule"/>
</dbReference>
<dbReference type="GO" id="GO:0000049">
    <property type="term" value="F:tRNA binding"/>
    <property type="evidence" value="ECO:0007669"/>
    <property type="project" value="InterPro"/>
</dbReference>
<dbReference type="GO" id="GO:0008270">
    <property type="term" value="F:zinc ion binding"/>
    <property type="evidence" value="ECO:0007669"/>
    <property type="project" value="InterPro"/>
</dbReference>
<dbReference type="GO" id="GO:0006424">
    <property type="term" value="P:glutamyl-tRNA aminoacylation"/>
    <property type="evidence" value="ECO:0007669"/>
    <property type="project" value="UniProtKB-UniRule"/>
</dbReference>
<dbReference type="CDD" id="cd00808">
    <property type="entry name" value="GluRS_core"/>
    <property type="match status" value="1"/>
</dbReference>
<dbReference type="FunFam" id="3.40.50.620:FF:000045">
    <property type="entry name" value="Glutamate--tRNA ligase, mitochondrial"/>
    <property type="match status" value="1"/>
</dbReference>
<dbReference type="Gene3D" id="1.10.10.350">
    <property type="match status" value="1"/>
</dbReference>
<dbReference type="Gene3D" id="3.40.50.620">
    <property type="entry name" value="HUPs"/>
    <property type="match status" value="1"/>
</dbReference>
<dbReference type="HAMAP" id="MF_00022">
    <property type="entry name" value="Glu_tRNA_synth_type1"/>
    <property type="match status" value="1"/>
</dbReference>
<dbReference type="InterPro" id="IPR045462">
    <property type="entry name" value="aa-tRNA-synth_I_cd-bd"/>
</dbReference>
<dbReference type="InterPro" id="IPR020751">
    <property type="entry name" value="aa-tRNA-synth_I_codon-bd_sub2"/>
</dbReference>
<dbReference type="InterPro" id="IPR001412">
    <property type="entry name" value="aa-tRNA-synth_I_CS"/>
</dbReference>
<dbReference type="InterPro" id="IPR008925">
    <property type="entry name" value="aa_tRNA-synth_I_cd-bd_sf"/>
</dbReference>
<dbReference type="InterPro" id="IPR004527">
    <property type="entry name" value="Glu-tRNA-ligase_bac/mito"/>
</dbReference>
<dbReference type="InterPro" id="IPR000924">
    <property type="entry name" value="Glu/Gln-tRNA-synth"/>
</dbReference>
<dbReference type="InterPro" id="IPR020058">
    <property type="entry name" value="Glu/Gln-tRNA-synth_Ib_cat-dom"/>
</dbReference>
<dbReference type="InterPro" id="IPR049940">
    <property type="entry name" value="GluQ/Sye"/>
</dbReference>
<dbReference type="InterPro" id="IPR033910">
    <property type="entry name" value="GluRS_core"/>
</dbReference>
<dbReference type="InterPro" id="IPR014729">
    <property type="entry name" value="Rossmann-like_a/b/a_fold"/>
</dbReference>
<dbReference type="NCBIfam" id="TIGR00464">
    <property type="entry name" value="gltX_bact"/>
    <property type="match status" value="1"/>
</dbReference>
<dbReference type="PANTHER" id="PTHR43311">
    <property type="entry name" value="GLUTAMATE--TRNA LIGASE"/>
    <property type="match status" value="1"/>
</dbReference>
<dbReference type="PANTHER" id="PTHR43311:SF2">
    <property type="entry name" value="GLUTAMATE--TRNA LIGASE, MITOCHONDRIAL-RELATED"/>
    <property type="match status" value="1"/>
</dbReference>
<dbReference type="Pfam" id="PF19269">
    <property type="entry name" value="Anticodon_2"/>
    <property type="match status" value="1"/>
</dbReference>
<dbReference type="Pfam" id="PF00749">
    <property type="entry name" value="tRNA-synt_1c"/>
    <property type="match status" value="1"/>
</dbReference>
<dbReference type="PRINTS" id="PR00987">
    <property type="entry name" value="TRNASYNTHGLU"/>
</dbReference>
<dbReference type="SUPFAM" id="SSF48163">
    <property type="entry name" value="An anticodon-binding domain of class I aminoacyl-tRNA synthetases"/>
    <property type="match status" value="1"/>
</dbReference>
<dbReference type="SUPFAM" id="SSF52374">
    <property type="entry name" value="Nucleotidylyl transferase"/>
    <property type="match status" value="1"/>
</dbReference>
<dbReference type="PROSITE" id="PS00178">
    <property type="entry name" value="AA_TRNA_LIGASE_I"/>
    <property type="match status" value="1"/>
</dbReference>
<gene>
    <name evidence="1" type="primary">gltX</name>
    <name type="ordered locus">Mmwyl1_2880</name>
</gene>
<feature type="chain" id="PRO_1000090087" description="Glutamate--tRNA ligase">
    <location>
        <begin position="1"/>
        <end position="493"/>
    </location>
</feature>
<feature type="short sequence motif" description="'HIGH' region" evidence="1">
    <location>
        <begin position="10"/>
        <end position="20"/>
    </location>
</feature>
<feature type="short sequence motif" description="'KMSKS' region" evidence="1">
    <location>
        <begin position="251"/>
        <end position="255"/>
    </location>
</feature>
<feature type="binding site" evidence="1">
    <location>
        <position position="254"/>
    </location>
    <ligand>
        <name>ATP</name>
        <dbReference type="ChEBI" id="CHEBI:30616"/>
    </ligand>
</feature>
<organism>
    <name type="scientific">Marinomonas sp. (strain MWYL1)</name>
    <dbReference type="NCBI Taxonomy" id="400668"/>
    <lineage>
        <taxon>Bacteria</taxon>
        <taxon>Pseudomonadati</taxon>
        <taxon>Pseudomonadota</taxon>
        <taxon>Gammaproteobacteria</taxon>
        <taxon>Oceanospirillales</taxon>
        <taxon>Oceanospirillaceae</taxon>
        <taxon>Marinomonas</taxon>
    </lineage>
</organism>
<keyword id="KW-0030">Aminoacyl-tRNA synthetase</keyword>
<keyword id="KW-0067">ATP-binding</keyword>
<keyword id="KW-0963">Cytoplasm</keyword>
<keyword id="KW-0436">Ligase</keyword>
<keyword id="KW-0547">Nucleotide-binding</keyword>
<keyword id="KW-0648">Protein biosynthesis</keyword>
<protein>
    <recommendedName>
        <fullName evidence="1">Glutamate--tRNA ligase</fullName>
        <ecNumber evidence="1">6.1.1.17</ecNumber>
    </recommendedName>
    <alternativeName>
        <fullName evidence="1">Glutamyl-tRNA synthetase</fullName>
        <shortName evidence="1">GluRS</shortName>
    </alternativeName>
</protein>
<evidence type="ECO:0000255" key="1">
    <source>
        <dbReference type="HAMAP-Rule" id="MF_00022"/>
    </source>
</evidence>
<comment type="function">
    <text evidence="1">Catalyzes the attachment of glutamate to tRNA(Glu) in a two-step reaction: glutamate is first activated by ATP to form Glu-AMP and then transferred to the acceptor end of tRNA(Glu).</text>
</comment>
<comment type="catalytic activity">
    <reaction evidence="1">
        <text>tRNA(Glu) + L-glutamate + ATP = L-glutamyl-tRNA(Glu) + AMP + diphosphate</text>
        <dbReference type="Rhea" id="RHEA:23540"/>
        <dbReference type="Rhea" id="RHEA-COMP:9663"/>
        <dbReference type="Rhea" id="RHEA-COMP:9680"/>
        <dbReference type="ChEBI" id="CHEBI:29985"/>
        <dbReference type="ChEBI" id="CHEBI:30616"/>
        <dbReference type="ChEBI" id="CHEBI:33019"/>
        <dbReference type="ChEBI" id="CHEBI:78442"/>
        <dbReference type="ChEBI" id="CHEBI:78520"/>
        <dbReference type="ChEBI" id="CHEBI:456215"/>
        <dbReference type="EC" id="6.1.1.17"/>
    </reaction>
</comment>
<comment type="subunit">
    <text evidence="1">Monomer.</text>
</comment>
<comment type="subcellular location">
    <subcellularLocation>
        <location evidence="1">Cytoplasm</location>
    </subcellularLocation>
</comment>
<comment type="similarity">
    <text evidence="1">Belongs to the class-I aminoacyl-tRNA synthetase family. Glutamate--tRNA ligase type 1 subfamily.</text>
</comment>
<name>SYE_MARMS</name>
<sequence length="493" mass="56490">MSEVRTRIAPSPTGDPHVGTAYIALFNMAFARKMGGKFILRIEDTDQTRSTPESEKMILDALRWLGLDWAEGPDVGGPYGPYRQSERGDIYGQYAQELIDKGHAFYAFETTEELDQMRNEQKEQGLPQKYDGRALNLTAEEVQAKLDAGVPYVIRMKIPEEGTCVVQDMLRGTIEIDWAQVDMQVLLKADGMPTYHLANVVDDHLMKITHVIRGEEWINSAPKHILLYQYFGWDMPTLCHMPLLRNPDKSKLSKRKNPTSILYYQRMGYMSEAVINYLGRMGWSMPDEREKFSLDEMIEHFDIQRVSLGGPVFDVEKLSWLNGMWIRENLTPETFAQKYVEWALNPEYLMKILPLVIPRVETFSDVADVAGFFLKGMLPITKEDFSSIKLEEETLRKAMQFALWRLEALSKWEKDEIFNEMKALAQVMEIKPKDFFAPLFVAISGTTASVSVFDSMAILGSDISRARMRTAVNVLGGPSKKEAKRWEKEYADL</sequence>
<accession>A6VZB3</accession>
<reference key="1">
    <citation type="submission" date="2007-06" db="EMBL/GenBank/DDBJ databases">
        <title>Complete sequence of Marinomonas sp. MWYL1.</title>
        <authorList>
            <consortium name="US DOE Joint Genome Institute"/>
            <person name="Copeland A."/>
            <person name="Lucas S."/>
            <person name="Lapidus A."/>
            <person name="Barry K."/>
            <person name="Glavina del Rio T."/>
            <person name="Dalin E."/>
            <person name="Tice H."/>
            <person name="Pitluck S."/>
            <person name="Kiss H."/>
            <person name="Brettin T."/>
            <person name="Bruce D."/>
            <person name="Detter J.C."/>
            <person name="Han C."/>
            <person name="Schmutz J."/>
            <person name="Larimer F."/>
            <person name="Land M."/>
            <person name="Hauser L."/>
            <person name="Kyrpides N."/>
            <person name="Kim E."/>
            <person name="Johnston A.W.B."/>
            <person name="Todd J.D."/>
            <person name="Rogers R."/>
            <person name="Wexler M."/>
            <person name="Bond P.L."/>
            <person name="Li Y."/>
            <person name="Richardson P."/>
        </authorList>
    </citation>
    <scope>NUCLEOTIDE SEQUENCE [LARGE SCALE GENOMIC DNA]</scope>
    <source>
        <strain>MWYL1</strain>
    </source>
</reference>
<proteinExistence type="inferred from homology"/>